<organism>
    <name type="scientific">Pseudomonas aeruginosa (strain ATCC 15692 / DSM 22644 / CIP 104116 / JCM 14847 / LMG 12228 / 1C / PRS 101 / PAO1)</name>
    <dbReference type="NCBI Taxonomy" id="208964"/>
    <lineage>
        <taxon>Bacteria</taxon>
        <taxon>Pseudomonadati</taxon>
        <taxon>Pseudomonadota</taxon>
        <taxon>Gammaproteobacteria</taxon>
        <taxon>Pseudomonadales</taxon>
        <taxon>Pseudomonadaceae</taxon>
        <taxon>Pseudomonas</taxon>
    </lineage>
</organism>
<keyword id="KW-0131">Cell cycle</keyword>
<keyword id="KW-0132">Cell division</keyword>
<keyword id="KW-0997">Cell inner membrane</keyword>
<keyword id="KW-1003">Cell membrane</keyword>
<keyword id="KW-0472">Membrane</keyword>
<keyword id="KW-1185">Reference proteome</keyword>
<accession>P47203</accession>
<name>FTSA_PSEAE</name>
<evidence type="ECO:0000255" key="1">
    <source>
        <dbReference type="HAMAP-Rule" id="MF_02033"/>
    </source>
</evidence>
<reference key="1">
    <citation type="submission" date="2000-01" db="EMBL/GenBank/DDBJ databases">
        <title>Physical mapping of 38 loci including aimE, ampC, ampR, arcA, aroK, catR, cypH, dapB, envA, envC, ftsA, ftsZ, groEL, murE, opdE, oprD, oprF, oprH, oprI, oprK, oprP, pbpB, pbpC, pheS, phoA, phoB, phoS, ponA, pyoS1, qin, rpoB, rpoH, sodB, soxR, sucC.</title>
        <authorList>
            <person name="Levesque R.C."/>
            <person name="Liao X."/>
            <person name="Lightfoot J."/>
            <person name="Charlebois I."/>
            <person name="Ouellet C."/>
            <person name="Morency M."/>
            <person name="Dewar K."/>
            <person name="Siehnel R."/>
            <person name="Lam J."/>
            <person name="Hancock R.E."/>
        </authorList>
    </citation>
    <scope>NUCLEOTIDE SEQUENCE [GENOMIC DNA]</scope>
    <source>
        <strain>ATCC 15692 / DSM 22644 / CIP 104116 / JCM 14847 / LMG 12228 / 1C / PRS 101 / PAO1</strain>
    </source>
</reference>
<reference key="2">
    <citation type="journal article" date="2000" name="Nature">
        <title>Complete genome sequence of Pseudomonas aeruginosa PAO1, an opportunistic pathogen.</title>
        <authorList>
            <person name="Stover C.K."/>
            <person name="Pham X.-Q.T."/>
            <person name="Erwin A.L."/>
            <person name="Mizoguchi S.D."/>
            <person name="Warrener P."/>
            <person name="Hickey M.J."/>
            <person name="Brinkman F.S.L."/>
            <person name="Hufnagle W.O."/>
            <person name="Kowalik D.J."/>
            <person name="Lagrou M."/>
            <person name="Garber R.L."/>
            <person name="Goltry L."/>
            <person name="Tolentino E."/>
            <person name="Westbrock-Wadman S."/>
            <person name="Yuan Y."/>
            <person name="Brody L.L."/>
            <person name="Coulter S.N."/>
            <person name="Folger K.R."/>
            <person name="Kas A."/>
            <person name="Larbig K."/>
            <person name="Lim R.M."/>
            <person name="Smith K.A."/>
            <person name="Spencer D.H."/>
            <person name="Wong G.K.-S."/>
            <person name="Wu Z."/>
            <person name="Paulsen I.T."/>
            <person name="Reizer J."/>
            <person name="Saier M.H. Jr."/>
            <person name="Hancock R.E.W."/>
            <person name="Lory S."/>
            <person name="Olson M.V."/>
        </authorList>
    </citation>
    <scope>NUCLEOTIDE SEQUENCE [LARGE SCALE GENOMIC DNA]</scope>
    <source>
        <strain>ATCC 15692 / DSM 22644 / CIP 104116 / JCM 14847 / LMG 12228 / 1C / PRS 101 / PAO1</strain>
    </source>
</reference>
<reference key="3">
    <citation type="journal article" date="1996" name="Microbiology">
        <title>Physical mapping of 32 genetic markers on the Pseudomonas aeruginosa PAO1 chromosome.</title>
        <authorList>
            <person name="Liao X."/>
            <person name="Charlebois I."/>
            <person name="Ouellet C."/>
            <person name="Morency M.J."/>
            <person name="Dewar K."/>
            <person name="Lightfoot J."/>
            <person name="Foster J."/>
            <person name="Siehnel R."/>
            <person name="Schweizer H."/>
            <person name="Lam J.S."/>
            <person name="Hancock R.E."/>
            <person name="Levesque R.C."/>
        </authorList>
    </citation>
    <scope>PRELIMINARY NUCLEOTIDE SEQUENCE [GENOMIC DNA] OF 184-417</scope>
    <source>
        <strain>ATCC 15692 / DSM 22644 / CIP 104116 / JCM 14847 / LMG 12228 / 1C / PRS 101 / PAO1</strain>
    </source>
</reference>
<sequence>MASVQSGKMIVGLDIGTSKVVALVGEVTADGQLEVVGIGTHPSRGLKKGVVVNIESTVQSIQRAIDEAQQMAGCRIHSAFVGIAGNHIRSLNSHGIVAIRDREVNPADIERVLDAAQAVAIPADQRVLHTLAQDYVIDNQEGVREPLGMSGVRLEAKVHVVTCAVNASQNIEKCVRRCGLEVDDIILEQLASAYSVLTEDEKELGVCLVDIGGGTTDIAIFTEGAIRHTAVIPIAGDQVTNDIAMALRTPTQYAEEIKIRYACALAKLAGAGETIKVPSVGDRPPRELSRQALAEVVEPRYDELFTLVQAELRRSGYEDLIPAGIVLTGGTSKMEGAVELAEEIFHMPVRLGVPYSVKGLTDVVRNPIYSTGVGLLMYGLQKQSDGMSMSVSGSSYSSDEPKAPVLERLKRWVQGNF</sequence>
<comment type="function">
    <text evidence="1">Cell division protein that is involved in the assembly of the Z ring. May serve as a membrane anchor for the Z ring.</text>
</comment>
<comment type="subunit">
    <text evidence="1">Self-interacts. Interacts with FtsZ.</text>
</comment>
<comment type="subcellular location">
    <subcellularLocation>
        <location evidence="1">Cell inner membrane</location>
        <topology evidence="1">Peripheral membrane protein</topology>
        <orientation evidence="1">Cytoplasmic side</orientation>
    </subcellularLocation>
    <text evidence="1">Localizes to the Z ring in an FtsZ-dependent manner. Targeted to the membrane through a conserved C-terminal amphipathic helix.</text>
</comment>
<comment type="similarity">
    <text evidence="1">Belongs to the FtsA/MreB family.</text>
</comment>
<gene>
    <name evidence="1" type="primary">ftsA</name>
    <name type="ordered locus">PA4408</name>
</gene>
<protein>
    <recommendedName>
        <fullName evidence="1">Cell division protein FtsA</fullName>
    </recommendedName>
</protein>
<dbReference type="EMBL" id="U19797">
    <property type="protein sequence ID" value="AAA95992.2"/>
    <property type="molecule type" value="Genomic_DNA"/>
</dbReference>
<dbReference type="EMBL" id="AE004091">
    <property type="protein sequence ID" value="AAG07796.1"/>
    <property type="molecule type" value="Genomic_DNA"/>
</dbReference>
<dbReference type="PIR" id="A83094">
    <property type="entry name" value="A83094"/>
</dbReference>
<dbReference type="RefSeq" id="NP_253098.1">
    <property type="nucleotide sequence ID" value="NC_002516.2"/>
</dbReference>
<dbReference type="RefSeq" id="WP_003094115.1">
    <property type="nucleotide sequence ID" value="NZ_QZGE01000004.1"/>
</dbReference>
<dbReference type="SMR" id="P47203"/>
<dbReference type="FunCoup" id="P47203">
    <property type="interactions" value="255"/>
</dbReference>
<dbReference type="STRING" id="208964.PA4408"/>
<dbReference type="PaxDb" id="208964-PA4408"/>
<dbReference type="DNASU" id="881321"/>
<dbReference type="GeneID" id="77222908"/>
<dbReference type="GeneID" id="881321"/>
<dbReference type="KEGG" id="pae:PA4408"/>
<dbReference type="PATRIC" id="fig|208964.12.peg.4617"/>
<dbReference type="PseudoCAP" id="PA4408"/>
<dbReference type="HOGENOM" id="CLU_037850_3_2_6"/>
<dbReference type="InParanoid" id="P47203"/>
<dbReference type="OrthoDB" id="9810567at2"/>
<dbReference type="PhylomeDB" id="P47203"/>
<dbReference type="BioCyc" id="PAER208964:G1FZ6-4495-MONOMER"/>
<dbReference type="Proteomes" id="UP000002438">
    <property type="component" value="Chromosome"/>
</dbReference>
<dbReference type="GO" id="GO:0032153">
    <property type="term" value="C:cell division site"/>
    <property type="evidence" value="ECO:0000318"/>
    <property type="project" value="GO_Central"/>
</dbReference>
<dbReference type="GO" id="GO:0009898">
    <property type="term" value="C:cytoplasmic side of plasma membrane"/>
    <property type="evidence" value="ECO:0000318"/>
    <property type="project" value="GO_Central"/>
</dbReference>
<dbReference type="GO" id="GO:0051301">
    <property type="term" value="P:cell division"/>
    <property type="evidence" value="ECO:0000318"/>
    <property type="project" value="GO_Central"/>
</dbReference>
<dbReference type="GO" id="GO:0043093">
    <property type="term" value="P:FtsZ-dependent cytokinesis"/>
    <property type="evidence" value="ECO:0007669"/>
    <property type="project" value="UniProtKB-UniRule"/>
</dbReference>
<dbReference type="CDD" id="cd24048">
    <property type="entry name" value="ASKHA_NBD_FtsA"/>
    <property type="match status" value="1"/>
</dbReference>
<dbReference type="FunFam" id="3.30.1490.110:FF:000002">
    <property type="entry name" value="Cell division protein FtsA"/>
    <property type="match status" value="1"/>
</dbReference>
<dbReference type="FunFam" id="3.30.420.40:FF:000032">
    <property type="entry name" value="Cell division protein FtsA"/>
    <property type="match status" value="1"/>
</dbReference>
<dbReference type="FunFam" id="3.30.420.40:FF:000035">
    <property type="entry name" value="Cell division protein FtsA"/>
    <property type="match status" value="1"/>
</dbReference>
<dbReference type="Gene3D" id="3.30.1490.110">
    <property type="match status" value="1"/>
</dbReference>
<dbReference type="Gene3D" id="3.30.420.40">
    <property type="match status" value="2"/>
</dbReference>
<dbReference type="HAMAP" id="MF_02033">
    <property type="entry name" value="FtsA"/>
    <property type="match status" value="1"/>
</dbReference>
<dbReference type="InterPro" id="IPR043129">
    <property type="entry name" value="ATPase_NBD"/>
</dbReference>
<dbReference type="InterPro" id="IPR020823">
    <property type="entry name" value="Cell_div_FtsA"/>
</dbReference>
<dbReference type="InterPro" id="IPR050696">
    <property type="entry name" value="FtsA/MreB"/>
</dbReference>
<dbReference type="InterPro" id="IPR003494">
    <property type="entry name" value="SHS2_FtsA"/>
</dbReference>
<dbReference type="NCBIfam" id="TIGR01174">
    <property type="entry name" value="ftsA"/>
    <property type="match status" value="1"/>
</dbReference>
<dbReference type="NCBIfam" id="NF007009">
    <property type="entry name" value="PRK09472.1"/>
    <property type="match status" value="1"/>
</dbReference>
<dbReference type="PANTHER" id="PTHR32432:SF4">
    <property type="entry name" value="CELL DIVISION PROTEIN FTSA"/>
    <property type="match status" value="1"/>
</dbReference>
<dbReference type="PANTHER" id="PTHR32432">
    <property type="entry name" value="CELL DIVISION PROTEIN FTSA-RELATED"/>
    <property type="match status" value="1"/>
</dbReference>
<dbReference type="Pfam" id="PF14450">
    <property type="entry name" value="FtsA"/>
    <property type="match status" value="2"/>
</dbReference>
<dbReference type="Pfam" id="PF02491">
    <property type="entry name" value="SHS2_FTSA"/>
    <property type="match status" value="1"/>
</dbReference>
<dbReference type="PIRSF" id="PIRSF003101">
    <property type="entry name" value="FtsA"/>
    <property type="match status" value="1"/>
</dbReference>
<dbReference type="SMART" id="SM00842">
    <property type="entry name" value="FtsA"/>
    <property type="match status" value="1"/>
</dbReference>
<dbReference type="SUPFAM" id="SSF53067">
    <property type="entry name" value="Actin-like ATPase domain"/>
    <property type="match status" value="2"/>
</dbReference>
<feature type="chain" id="PRO_0000062743" description="Cell division protein FtsA">
    <location>
        <begin position="1"/>
        <end position="417"/>
    </location>
</feature>
<proteinExistence type="inferred from homology"/>